<sequence length="538" mass="58238">MSSPVIGITFGNTSSSIAYINPKNDVDVIANPDGERAIPSALSYVGEDEYHGGQALQQLIRNPKNTIINFRDFIGLPFDKCDVSKCANGAPAVEVDGKVGFVISRGEGKEEKLTVDEVVSRHLNRLKLAAEDYIGSAVKEAVLTVPTNFSEEQKTALKASAAKIGLQIVQFINEPSAALLAHAEQFPFEKDVNVVVADFGGIRSDAAVIAVRNGIFTILATAHDLSLGGDNLDTELVEYFASEFQKKYQANPRKNARSLAKLKANSSITKKTLSNATSATISIDSLADGFDYHASINRMRYELVANKVFAQFSSFVDSVIAKAELDPLDIDAVLLTGGVSFTPKLTTNLEYTLPESVEILGPQNKNASNNPNELAASGAALQARLISDYDADELAEALQPVIVNTPHLKKPIGLIGAKGEFHPVLLAETSFPVQKKLTLKQAKGDFLIGVYEGDHHIEEKTLEPIPKEENAEEDDESEWSDDEPEVVREKLYTLGTKLMELGIKNANGVEIIFNINKDGALRVTARDLKTGNAVKGEL</sequence>
<protein>
    <recommendedName>
        <fullName>Ribosome-associated complex subunit SSZ1</fullName>
    </recommendedName>
    <alternativeName>
        <fullName>DnaK-related protein SSZ1</fullName>
    </alternativeName>
    <alternativeName>
        <fullName>Heat shock protein 70 homolog SSZ1</fullName>
    </alternativeName>
    <alternativeName>
        <fullName>Pleiotropic drug resistance protein 13</fullName>
    </alternativeName>
</protein>
<proteinExistence type="evidence at protein level"/>
<name>SSZ1_YEAST</name>
<keyword id="KW-0002">3D-structure</keyword>
<keyword id="KW-0067">ATP-binding</keyword>
<keyword id="KW-0963">Cytoplasm</keyword>
<keyword id="KW-0547">Nucleotide-binding</keyword>
<keyword id="KW-0597">Phosphoprotein</keyword>
<keyword id="KW-1185">Reference proteome</keyword>
<reference key="1">
    <citation type="journal article" date="1994" name="Science">
        <title>Complete nucleotide sequence of Saccharomyces cerevisiae chromosome VIII.</title>
        <authorList>
            <person name="Johnston M."/>
            <person name="Andrews S."/>
            <person name="Brinkman R."/>
            <person name="Cooper J."/>
            <person name="Ding H."/>
            <person name="Dover J."/>
            <person name="Du Z."/>
            <person name="Favello A."/>
            <person name="Fulton L."/>
            <person name="Gattung S."/>
            <person name="Geisel C."/>
            <person name="Kirsten J."/>
            <person name="Kucaba T."/>
            <person name="Hillier L.W."/>
            <person name="Jier M."/>
            <person name="Johnston L."/>
            <person name="Langston Y."/>
            <person name="Latreille P."/>
            <person name="Louis E.J."/>
            <person name="Macri C."/>
            <person name="Mardis E."/>
            <person name="Menezes S."/>
            <person name="Mouser L."/>
            <person name="Nhan M."/>
            <person name="Rifkin L."/>
            <person name="Riles L."/>
            <person name="St Peter H."/>
            <person name="Trevaskis E."/>
            <person name="Vaughan K."/>
            <person name="Vignati D."/>
            <person name="Wilcox L."/>
            <person name="Wohldman P."/>
            <person name="Waterston R."/>
            <person name="Wilson R."/>
            <person name="Vaudin M."/>
        </authorList>
    </citation>
    <scope>NUCLEOTIDE SEQUENCE [LARGE SCALE GENOMIC DNA]</scope>
    <source>
        <strain>ATCC 204508 / S288c</strain>
    </source>
</reference>
<reference key="2">
    <citation type="journal article" date="2014" name="G3 (Bethesda)">
        <title>The reference genome sequence of Saccharomyces cerevisiae: Then and now.</title>
        <authorList>
            <person name="Engel S.R."/>
            <person name="Dietrich F.S."/>
            <person name="Fisk D.G."/>
            <person name="Binkley G."/>
            <person name="Balakrishnan R."/>
            <person name="Costanzo M.C."/>
            <person name="Dwight S.S."/>
            <person name="Hitz B.C."/>
            <person name="Karra K."/>
            <person name="Nash R.S."/>
            <person name="Weng S."/>
            <person name="Wong E.D."/>
            <person name="Lloyd P."/>
            <person name="Skrzypek M.S."/>
            <person name="Miyasato S.R."/>
            <person name="Simison M."/>
            <person name="Cherry J.M."/>
        </authorList>
    </citation>
    <scope>GENOME REANNOTATION</scope>
    <source>
        <strain>ATCC 204508 / S288c</strain>
    </source>
</reference>
<reference key="3">
    <citation type="journal article" date="2007" name="Genome Res.">
        <title>Approaching a complete repository of sequence-verified protein-encoding clones for Saccharomyces cerevisiae.</title>
        <authorList>
            <person name="Hu Y."/>
            <person name="Rolfs A."/>
            <person name="Bhullar B."/>
            <person name="Murthy T.V.S."/>
            <person name="Zhu C."/>
            <person name="Berger M.F."/>
            <person name="Camargo A.A."/>
            <person name="Kelley F."/>
            <person name="McCarron S."/>
            <person name="Jepson D."/>
            <person name="Richardson A."/>
            <person name="Raphael J."/>
            <person name="Moreira D."/>
            <person name="Taycher E."/>
            <person name="Zuo D."/>
            <person name="Mohr S."/>
            <person name="Kane M.F."/>
            <person name="Williamson J."/>
            <person name="Simpson A.J.G."/>
            <person name="Bulyk M.L."/>
            <person name="Harlow E."/>
            <person name="Marsischky G."/>
            <person name="Kolodner R.D."/>
            <person name="LaBaer J."/>
        </authorList>
    </citation>
    <scope>NUCLEOTIDE SEQUENCE [GENOMIC DNA]</scope>
    <source>
        <strain>ATCC 204508 / S288c</strain>
    </source>
</reference>
<reference key="4">
    <citation type="submission" date="2003-09" db="EMBL/GenBank/DDBJ databases">
        <title>Verification of 3' and 5' ends of S. cerevisiae transcripts.</title>
        <authorList>
            <person name="Kennedy M.C."/>
            <person name="Dietrich F.S."/>
        </authorList>
    </citation>
    <scope>NUCLEOTIDE SEQUENCE [MRNA] OF 1-72 AND 504-538</scope>
    <source>
        <strain>ATCC 204511 / S288c / AB972</strain>
    </source>
</reference>
<reference key="5">
    <citation type="journal article" date="1996" name="Proc. Natl. Acad. Sci. U.S.A.">
        <title>Linking genome and proteome by mass spectrometry: large-scale identification of yeast proteins from two dimensional gels.</title>
        <authorList>
            <person name="Shevchenko A."/>
            <person name="Jensen O.N."/>
            <person name="Podtelejnikov A.V."/>
            <person name="Sagliocco F."/>
            <person name="Wilm M."/>
            <person name="Vorm O."/>
            <person name="Mortensen P."/>
            <person name="Shevchenko A."/>
            <person name="Boucherie H."/>
            <person name="Mann M."/>
        </authorList>
    </citation>
    <scope>IDENTIFICATION BY MASS SPECTROMETRY</scope>
</reference>
<reference key="6">
    <citation type="journal article" date="2000" name="Gene">
        <title>Yeast Pdr13p and Zuo1p molecular chaperones are new functional Hsp70 and Hsp40 partners.</title>
        <authorList>
            <person name="Michimoto T."/>
            <person name="Aoki T."/>
            <person name="Toh-e A."/>
            <person name="Kikuchi Y."/>
        </authorList>
    </citation>
    <scope>INTERACTION WITH ZUO1</scope>
</reference>
<reference key="7">
    <citation type="journal article" date="2001" name="Proc. Natl. Acad. Sci. U.S.A.">
        <title>RAC, a stable ribosome-associated complex in yeast formed by the DnaK-DnaJ homologs Ssz1p and zuotin.</title>
        <authorList>
            <person name="Gautschi M."/>
            <person name="Lilie H."/>
            <person name="Fuenfschilling U."/>
            <person name="Mun A."/>
            <person name="Ross S."/>
            <person name="Lithgow T."/>
            <person name="Ruecknagel P."/>
            <person name="Rospert S."/>
        </authorList>
    </citation>
    <scope>IDENTIFICATION IN RAC</scope>
</reference>
<reference key="8">
    <citation type="journal article" date="2002" name="Proc. Natl. Acad. Sci. U.S.A.">
        <title>The in vivo function of the ribosome-associated Hsp70, Ssz1, does not require its putative peptide-binding domain.</title>
        <authorList>
            <person name="Hundley H."/>
            <person name="Eisenman H."/>
            <person name="Walter W."/>
            <person name="Evans T."/>
            <person name="Hotokezaka Y."/>
            <person name="Wiedmann M."/>
            <person name="Craig E.A."/>
        </authorList>
    </citation>
    <scope>FUNCTION</scope>
</reference>
<reference key="9">
    <citation type="journal article" date="2003" name="Nature">
        <title>Sequencing and comparison of yeast species to identify genes and regulatory elements.</title>
        <authorList>
            <person name="Kellis M."/>
            <person name="Patterson N."/>
            <person name="Endrizzi M."/>
            <person name="Birren B.W."/>
            <person name="Lander E.S."/>
        </authorList>
    </citation>
    <scope>IDENTIFICATION OF PROBABLE INITIATION SITE</scope>
</reference>
<reference key="10">
    <citation type="journal article" date="2003" name="Nature">
        <title>Global analysis of protein localization in budding yeast.</title>
        <authorList>
            <person name="Huh W.-K."/>
            <person name="Falvo J.V."/>
            <person name="Gerke L.C."/>
            <person name="Carroll A.S."/>
            <person name="Howson R.W."/>
            <person name="Weissman J.S."/>
            <person name="O'Shea E.K."/>
        </authorList>
    </citation>
    <scope>SUBCELLULAR LOCATION [LARGE SCALE ANALYSIS]</scope>
</reference>
<reference key="11">
    <citation type="journal article" date="2003" name="Nature">
        <title>Global analysis of protein expression in yeast.</title>
        <authorList>
            <person name="Ghaemmaghami S."/>
            <person name="Huh W.-K."/>
            <person name="Bower K."/>
            <person name="Howson R.W."/>
            <person name="Belle A."/>
            <person name="Dephoure N."/>
            <person name="O'Shea E.K."/>
            <person name="Weissman J.S."/>
        </authorList>
    </citation>
    <scope>LEVEL OF PROTEIN EXPRESSION [LARGE SCALE ANALYSIS]</scope>
</reference>
<reference key="12">
    <citation type="journal article" date="2004" name="Mol. Cell. Biol.">
        <title>The ribosome-bound chaperones RAC and Ssb1/2p are required for accurate translation in Saccharomyces cerevisiae.</title>
        <authorList>
            <person name="Rakwalska M."/>
            <person name="Rospert S."/>
        </authorList>
    </citation>
    <scope>FUNCTION</scope>
    <scope>MUTAGENESIS OF SER-295</scope>
</reference>
<reference key="13">
    <citation type="journal article" date="2005" name="Nat. Struct. Mol. Biol.">
        <title>The Hsp70 Ssz1 modulates the function of the ribosome-associated J-protein Zuo1.</title>
        <authorList>
            <person name="Huang P."/>
            <person name="Gautschi M."/>
            <person name="Walter W."/>
            <person name="Rospert S."/>
            <person name="Craig E.A."/>
        </authorList>
    </citation>
    <scope>FUNCTION</scope>
    <scope>ATP-BINDING</scope>
</reference>
<reference key="14">
    <citation type="journal article" date="2007" name="J. Proteome Res.">
        <title>Large-scale phosphorylation analysis of alpha-factor-arrested Saccharomyces cerevisiae.</title>
        <authorList>
            <person name="Li X."/>
            <person name="Gerber S.A."/>
            <person name="Rudner A.D."/>
            <person name="Beausoleil S.A."/>
            <person name="Haas W."/>
            <person name="Villen J."/>
            <person name="Elias J.E."/>
            <person name="Gygi S.P."/>
        </authorList>
    </citation>
    <scope>PHOSPHORYLATION [LARGE SCALE ANALYSIS] AT SER-477 AND SER-480</scope>
    <scope>IDENTIFICATION BY MASS SPECTROMETRY [LARGE SCALE ANALYSIS]</scope>
    <source>
        <strain>ADR376</strain>
    </source>
</reference>
<reference key="15">
    <citation type="journal article" date="2007" name="Proc. Natl. Acad. Sci. U.S.A.">
        <title>Analysis of phosphorylation sites on proteins from Saccharomyces cerevisiae by electron transfer dissociation (ETD) mass spectrometry.</title>
        <authorList>
            <person name="Chi A."/>
            <person name="Huttenhower C."/>
            <person name="Geer L.Y."/>
            <person name="Coon J.J."/>
            <person name="Syka J.E.P."/>
            <person name="Bai D.L."/>
            <person name="Shabanowitz J."/>
            <person name="Burke D.J."/>
            <person name="Troyanskaya O.G."/>
            <person name="Hunt D.F."/>
        </authorList>
    </citation>
    <scope>PHOSPHORYLATION [LARGE SCALE ANALYSIS] AT SER-480</scope>
    <scope>IDENTIFICATION BY MASS SPECTROMETRY [LARGE SCALE ANALYSIS]</scope>
</reference>
<reference key="16">
    <citation type="journal article" date="2008" name="Mol. Cell. Proteomics">
        <title>A multidimensional chromatography technology for in-depth phosphoproteome analysis.</title>
        <authorList>
            <person name="Albuquerque C.P."/>
            <person name="Smolka M.B."/>
            <person name="Payne S.H."/>
            <person name="Bafna V."/>
            <person name="Eng J."/>
            <person name="Zhou H."/>
        </authorList>
    </citation>
    <scope>PHOSPHORYLATION [LARGE SCALE ANALYSIS] AT SER-477 AND SER-480</scope>
    <scope>IDENTIFICATION BY MASS SPECTROMETRY [LARGE SCALE ANALYSIS]</scope>
</reference>
<reference key="17">
    <citation type="journal article" date="2009" name="Science">
        <title>Global analysis of Cdk1 substrate phosphorylation sites provides insights into evolution.</title>
        <authorList>
            <person name="Holt L.J."/>
            <person name="Tuch B.B."/>
            <person name="Villen J."/>
            <person name="Johnson A.D."/>
            <person name="Gygi S.P."/>
            <person name="Morgan D.O."/>
        </authorList>
    </citation>
    <scope>PHOSPHORYLATION [LARGE SCALE ANALYSIS] AT SER-477 AND SER-480</scope>
    <scope>IDENTIFICATION BY MASS SPECTROMETRY [LARGE SCALE ANALYSIS]</scope>
</reference>
<gene>
    <name type="primary">SSZ1</name>
    <name type="synonym">PDR13</name>
    <name type="ordered locus">YHR064C</name>
</gene>
<evidence type="ECO:0000255" key="1"/>
<evidence type="ECO:0000256" key="2">
    <source>
        <dbReference type="SAM" id="MobiDB-lite"/>
    </source>
</evidence>
<evidence type="ECO:0000269" key="3">
    <source>
    </source>
</evidence>
<evidence type="ECO:0000269" key="4">
    <source>
    </source>
</evidence>
<evidence type="ECO:0000269" key="5">
    <source>
    </source>
</evidence>
<evidence type="ECO:0000269" key="6">
    <source>
    </source>
</evidence>
<evidence type="ECO:0000269" key="7">
    <source>
    </source>
</evidence>
<evidence type="ECO:0000269" key="8">
    <source>
    </source>
</evidence>
<evidence type="ECO:0000305" key="9"/>
<evidence type="ECO:0007744" key="10">
    <source>
    </source>
</evidence>
<evidence type="ECO:0007744" key="11">
    <source>
    </source>
</evidence>
<evidence type="ECO:0007744" key="12">
    <source>
    </source>
</evidence>
<evidence type="ECO:0007744" key="13">
    <source>
    </source>
</evidence>
<dbReference type="EMBL" id="U00061">
    <property type="protein sequence ID" value="AAB68391.1"/>
    <property type="status" value="ALT_INIT"/>
    <property type="molecule type" value="Genomic_DNA"/>
</dbReference>
<dbReference type="EMBL" id="AY693127">
    <property type="protein sequence ID" value="AAT93146.1"/>
    <property type="status" value="ALT_INIT"/>
    <property type="molecule type" value="Genomic_DNA"/>
</dbReference>
<dbReference type="EMBL" id="AH013308">
    <property type="protein sequence ID" value="AAQ97232.1"/>
    <property type="molecule type" value="mRNA"/>
</dbReference>
<dbReference type="EMBL" id="AH013308">
    <property type="protein sequence ID" value="AAQ97233.1"/>
    <property type="molecule type" value="mRNA"/>
</dbReference>
<dbReference type="EMBL" id="BK006934">
    <property type="protein sequence ID" value="DAA06757.1"/>
    <property type="molecule type" value="Genomic_DNA"/>
</dbReference>
<dbReference type="PIR" id="S46712">
    <property type="entry name" value="S46712"/>
</dbReference>
<dbReference type="RefSeq" id="NP_011931.2">
    <property type="nucleotide sequence ID" value="NM_001179194.1"/>
</dbReference>
<dbReference type="PDB" id="7X3K">
    <property type="method" value="EM"/>
    <property type="resolution" value="6.00 A"/>
    <property type="chains" value="B=1-538"/>
</dbReference>
<dbReference type="PDBsum" id="7X3K"/>
<dbReference type="EMDB" id="EMD-32991"/>
<dbReference type="SMR" id="P38788"/>
<dbReference type="BioGRID" id="36496">
    <property type="interactions" value="224"/>
</dbReference>
<dbReference type="ComplexPortal" id="CPX-1743">
    <property type="entry name" value="Ribosome-associated complex"/>
</dbReference>
<dbReference type="DIP" id="DIP-6305N"/>
<dbReference type="FunCoup" id="P38788">
    <property type="interactions" value="506"/>
</dbReference>
<dbReference type="IntAct" id="P38788">
    <property type="interactions" value="113"/>
</dbReference>
<dbReference type="MINT" id="P38788"/>
<dbReference type="STRING" id="4932.YHR064C"/>
<dbReference type="iPTMnet" id="P38788"/>
<dbReference type="PaxDb" id="4932-YHR064C"/>
<dbReference type="PeptideAtlas" id="P38788"/>
<dbReference type="EnsemblFungi" id="YHR064C_mRNA">
    <property type="protein sequence ID" value="YHR064C"/>
    <property type="gene ID" value="YHR064C"/>
</dbReference>
<dbReference type="GeneID" id="856461"/>
<dbReference type="KEGG" id="sce:YHR064C"/>
<dbReference type="AGR" id="SGD:S000001106"/>
<dbReference type="SGD" id="S000001106">
    <property type="gene designation" value="SSZ1"/>
</dbReference>
<dbReference type="VEuPathDB" id="FungiDB:YHR064C"/>
<dbReference type="eggNOG" id="KOG0101">
    <property type="taxonomic scope" value="Eukaryota"/>
</dbReference>
<dbReference type="GeneTree" id="ENSGT00940000156380"/>
<dbReference type="HOGENOM" id="CLU_005965_0_3_1"/>
<dbReference type="InParanoid" id="P38788"/>
<dbReference type="OMA" id="NAHNTIT"/>
<dbReference type="OrthoDB" id="29851at2759"/>
<dbReference type="BioCyc" id="YEAST:G3O-31115-MONOMER"/>
<dbReference type="BioGRID-ORCS" id="856461">
    <property type="hits" value="7 hits in 10 CRISPR screens"/>
</dbReference>
<dbReference type="CD-CODE" id="E03F929F">
    <property type="entry name" value="Stress granule"/>
</dbReference>
<dbReference type="PRO" id="PR:P38788"/>
<dbReference type="Proteomes" id="UP000002311">
    <property type="component" value="Chromosome VIII"/>
</dbReference>
<dbReference type="RNAct" id="P38788">
    <property type="molecule type" value="protein"/>
</dbReference>
<dbReference type="GO" id="GO:0005737">
    <property type="term" value="C:cytoplasm"/>
    <property type="evidence" value="ECO:0000314"/>
    <property type="project" value="SGD"/>
</dbReference>
<dbReference type="GO" id="GO:0005829">
    <property type="term" value="C:cytosol"/>
    <property type="evidence" value="ECO:0000318"/>
    <property type="project" value="GO_Central"/>
</dbReference>
<dbReference type="GO" id="GO:0005634">
    <property type="term" value="C:nucleus"/>
    <property type="evidence" value="ECO:0000318"/>
    <property type="project" value="GO_Central"/>
</dbReference>
<dbReference type="GO" id="GO:0005886">
    <property type="term" value="C:plasma membrane"/>
    <property type="evidence" value="ECO:0000318"/>
    <property type="project" value="GO_Central"/>
</dbReference>
<dbReference type="GO" id="GO:0101031">
    <property type="term" value="C:protein folding chaperone complex"/>
    <property type="evidence" value="ECO:0000353"/>
    <property type="project" value="ComplexPortal"/>
</dbReference>
<dbReference type="GO" id="GO:0005524">
    <property type="term" value="F:ATP binding"/>
    <property type="evidence" value="ECO:0007669"/>
    <property type="project" value="UniProtKB-KW"/>
</dbReference>
<dbReference type="GO" id="GO:0016887">
    <property type="term" value="F:ATP hydrolysis activity"/>
    <property type="evidence" value="ECO:0000318"/>
    <property type="project" value="GO_Central"/>
</dbReference>
<dbReference type="GO" id="GO:0140662">
    <property type="term" value="F:ATP-dependent protein folding chaperone"/>
    <property type="evidence" value="ECO:0007669"/>
    <property type="project" value="InterPro"/>
</dbReference>
<dbReference type="GO" id="GO:0031072">
    <property type="term" value="F:heat shock protein binding"/>
    <property type="evidence" value="ECO:0000318"/>
    <property type="project" value="GO_Central"/>
</dbReference>
<dbReference type="GO" id="GO:0044183">
    <property type="term" value="F:protein folding chaperone"/>
    <property type="evidence" value="ECO:0000318"/>
    <property type="project" value="GO_Central"/>
</dbReference>
<dbReference type="GO" id="GO:0051082">
    <property type="term" value="F:unfolded protein binding"/>
    <property type="evidence" value="ECO:0000315"/>
    <property type="project" value="SGD"/>
</dbReference>
<dbReference type="GO" id="GO:0051083">
    <property type="term" value="P:'de novo' cotranslational protein folding"/>
    <property type="evidence" value="ECO:0000314"/>
    <property type="project" value="ComplexPortal"/>
</dbReference>
<dbReference type="GO" id="GO:0051085">
    <property type="term" value="P:chaperone cofactor-dependent protein refolding"/>
    <property type="evidence" value="ECO:0000318"/>
    <property type="project" value="GO_Central"/>
</dbReference>
<dbReference type="GO" id="GO:0002181">
    <property type="term" value="P:cytoplasmic translation"/>
    <property type="evidence" value="ECO:0000315"/>
    <property type="project" value="SGD"/>
</dbReference>
<dbReference type="GO" id="GO:0006457">
    <property type="term" value="P:protein folding"/>
    <property type="evidence" value="ECO:0000303"/>
    <property type="project" value="ComplexPortal"/>
</dbReference>
<dbReference type="GO" id="GO:0042026">
    <property type="term" value="P:protein refolding"/>
    <property type="evidence" value="ECO:0000318"/>
    <property type="project" value="GO_Central"/>
</dbReference>
<dbReference type="GO" id="GO:0006450">
    <property type="term" value="P:regulation of translational fidelity"/>
    <property type="evidence" value="ECO:0000314"/>
    <property type="project" value="ComplexPortal"/>
</dbReference>
<dbReference type="GO" id="GO:0006364">
    <property type="term" value="P:rRNA processing"/>
    <property type="evidence" value="ECO:0000315"/>
    <property type="project" value="SGD"/>
</dbReference>
<dbReference type="GO" id="GO:0006452">
    <property type="term" value="P:translational frameshifting"/>
    <property type="evidence" value="ECO:0000315"/>
    <property type="project" value="SGD"/>
</dbReference>
<dbReference type="CDD" id="cd10232">
    <property type="entry name" value="ASKHA_NBD_HSP70_ScSsz1p-like"/>
    <property type="match status" value="1"/>
</dbReference>
<dbReference type="FunFam" id="3.90.640.10:FF:000010">
    <property type="entry name" value="heat shock 70 kDa protein 14"/>
    <property type="match status" value="1"/>
</dbReference>
<dbReference type="FunFam" id="2.60.34.10:FF:000029">
    <property type="entry name" value="Ssz1p"/>
    <property type="match status" value="1"/>
</dbReference>
<dbReference type="Gene3D" id="3.30.30.30">
    <property type="match status" value="1"/>
</dbReference>
<dbReference type="Gene3D" id="3.30.420.40">
    <property type="match status" value="2"/>
</dbReference>
<dbReference type="Gene3D" id="3.90.640.10">
    <property type="entry name" value="Actin, Chain A, domain 4"/>
    <property type="match status" value="1"/>
</dbReference>
<dbReference type="Gene3D" id="2.60.34.10">
    <property type="entry name" value="Substrate Binding Domain Of DNAk, Chain A, domain 1"/>
    <property type="match status" value="1"/>
</dbReference>
<dbReference type="InterPro" id="IPR043129">
    <property type="entry name" value="ATPase_NBD"/>
</dbReference>
<dbReference type="InterPro" id="IPR029047">
    <property type="entry name" value="HSP70_peptide-bd_sf"/>
</dbReference>
<dbReference type="InterPro" id="IPR013126">
    <property type="entry name" value="Hsp_70_fam"/>
</dbReference>
<dbReference type="PANTHER" id="PTHR45639:SF32">
    <property type="entry name" value="HEAT SHOCK PROTEIN PDR13"/>
    <property type="match status" value="1"/>
</dbReference>
<dbReference type="PANTHER" id="PTHR45639">
    <property type="entry name" value="HSC70CB, ISOFORM G-RELATED"/>
    <property type="match status" value="1"/>
</dbReference>
<dbReference type="Pfam" id="PF00012">
    <property type="entry name" value="HSP70"/>
    <property type="match status" value="1"/>
</dbReference>
<dbReference type="PRINTS" id="PR00301">
    <property type="entry name" value="HEATSHOCK70"/>
</dbReference>
<dbReference type="SUPFAM" id="SSF53067">
    <property type="entry name" value="Actin-like ATPase domain"/>
    <property type="match status" value="2"/>
</dbReference>
<dbReference type="SUPFAM" id="SSF100920">
    <property type="entry name" value="Heat shock protein 70kD (HSP70), peptide-binding domain"/>
    <property type="match status" value="1"/>
</dbReference>
<accession>P38788</accession>
<accession>D3DL13</accession>
<accession>Q6B1F3</accession>
<accession>Q6TQT7</accession>
<accession>Q6TQT8</accession>
<comment type="function">
    <text evidence="4 7 8">Component of the ribosome-associated complex (RAC), a heterodimeric chaperone complex involved in regulation of accurate translation termination and in folding or maintaining nascent polypeptides in a folding-competent state. RAC stimulates the ATPase activity of the ribosome-associated pool of Hsp70-type chaperones SSB1/SSB2 that bind to the nascent polypeptide chain. SSZ1 is required for ZUO1 to function efficiently as a J-protein for SSB1/SSB2. Also involved in pleiotropic drug resistance by post-translational activation of transcription factor PDR1.</text>
</comment>
<comment type="subunit">
    <text evidence="3">RAC is a heterodimer of the Hsp70/DnaK-type chaperone SSZ1 and the Hsp40/DnaJ-type chaperone ZUO1. RAC associates with ribosomes via ZUO1.</text>
</comment>
<comment type="interaction">
    <interactant intactId="EBI-24570">
        <id>P38788</id>
    </interactant>
    <interactant intactId="EBI-29684">
        <id>P32527</id>
        <label>ZUO1</label>
    </interactant>
    <organismsDiffer>false</organismsDiffer>
    <experiments>10</experiments>
</comment>
<comment type="subcellular location">
    <subcellularLocation>
        <location evidence="5">Cytoplasm</location>
    </subcellularLocation>
</comment>
<comment type="domain">
    <text>Neither ATP binding nor ATP hydrolysis is required for SSZ1 function.</text>
</comment>
<comment type="domain">
    <text>Does not seem to bind unfolded protein substrates, as its C-terminal putative peptide-binding domain is not required for its function.</text>
</comment>
<comment type="miscellaneous">
    <text evidence="6">Present with 73600 molecules/cell in log phase SD medium.</text>
</comment>
<comment type="similarity">
    <text evidence="9">Belongs to the heat shock protein 70 family.</text>
</comment>
<comment type="sequence caution" evidence="9">
    <conflict type="erroneous initiation">
        <sequence resource="EMBL-CDS" id="AAB68391"/>
    </conflict>
</comment>
<comment type="sequence caution" evidence="9">
    <conflict type="erroneous initiation">
        <sequence resource="EMBL-CDS" id="AAT93146"/>
    </conflict>
</comment>
<organism>
    <name type="scientific">Saccharomyces cerevisiae (strain ATCC 204508 / S288c)</name>
    <name type="common">Baker's yeast</name>
    <dbReference type="NCBI Taxonomy" id="559292"/>
    <lineage>
        <taxon>Eukaryota</taxon>
        <taxon>Fungi</taxon>
        <taxon>Dikarya</taxon>
        <taxon>Ascomycota</taxon>
        <taxon>Saccharomycotina</taxon>
        <taxon>Saccharomycetes</taxon>
        <taxon>Saccharomycetales</taxon>
        <taxon>Saccharomycetaceae</taxon>
        <taxon>Saccharomyces</taxon>
    </lineage>
</organism>
<feature type="chain" id="PRO_0000078400" description="Ribosome-associated complex subunit SSZ1">
    <location>
        <begin position="1"/>
        <end position="538"/>
    </location>
</feature>
<feature type="region of interest" description="Peptide-binding domain" evidence="1">
    <location>
        <begin position="400"/>
        <end position="538"/>
    </location>
</feature>
<feature type="region of interest" description="Disordered" evidence="2">
    <location>
        <begin position="464"/>
        <end position="484"/>
    </location>
</feature>
<feature type="compositionally biased region" description="Acidic residues" evidence="2">
    <location>
        <begin position="470"/>
        <end position="484"/>
    </location>
</feature>
<feature type="modified residue" description="Phosphoserine" evidence="11 12 13">
    <location>
        <position position="477"/>
    </location>
</feature>
<feature type="modified residue" description="Phosphoserine" evidence="10 11 12 13">
    <location>
        <position position="480"/>
    </location>
</feature>
<feature type="mutagenesis site" description="Increases readthrough in translation termination." evidence="7">
    <original>S</original>
    <variation>F</variation>
    <location>
        <position position="295"/>
    </location>
</feature>
<feature type="sequence conflict" description="In Ref. 3; AAT93146." evidence="9" ref="3">
    <original>V</original>
    <variation>A</variation>
    <location>
        <position position="208"/>
    </location>
</feature>